<keyword id="KW-0032">Aminotransferase</keyword>
<keyword id="KW-1185">Reference proteome</keyword>
<keyword id="KW-0808">Transferase</keyword>
<comment type="function">
    <text evidence="1">The glycine cleavage system catalyzes the degradation of glycine.</text>
</comment>
<comment type="catalytic activity">
    <reaction evidence="1">
        <text>N(6)-[(R)-S(8)-aminomethyldihydrolipoyl]-L-lysyl-[protein] + (6S)-5,6,7,8-tetrahydrofolate = N(6)-[(R)-dihydrolipoyl]-L-lysyl-[protein] + (6R)-5,10-methylene-5,6,7,8-tetrahydrofolate + NH4(+)</text>
        <dbReference type="Rhea" id="RHEA:16945"/>
        <dbReference type="Rhea" id="RHEA-COMP:10475"/>
        <dbReference type="Rhea" id="RHEA-COMP:10492"/>
        <dbReference type="ChEBI" id="CHEBI:15636"/>
        <dbReference type="ChEBI" id="CHEBI:28938"/>
        <dbReference type="ChEBI" id="CHEBI:57453"/>
        <dbReference type="ChEBI" id="CHEBI:83100"/>
        <dbReference type="ChEBI" id="CHEBI:83143"/>
        <dbReference type="EC" id="2.1.2.10"/>
    </reaction>
</comment>
<comment type="subunit">
    <text evidence="1">The glycine cleavage system is composed of four proteins: P, T, L and H.</text>
</comment>
<comment type="miscellaneous">
    <text>Was identified as a high-confidence drug target.</text>
</comment>
<comment type="similarity">
    <text evidence="1">Belongs to the GcvT family.</text>
</comment>
<comment type="sequence caution" evidence="2">
    <conflict type="erroneous initiation">
        <sequence resource="EMBL-CDS" id="CCP44988"/>
    </conflict>
    <text>Extended N-terminus.</text>
</comment>
<gene>
    <name evidence="1" type="primary">gcvT</name>
    <name type="ordered locus">Rv2211c</name>
    <name type="ORF">MTCY190.22</name>
</gene>
<feature type="chain" id="PRO_0000122574" description="Aminomethyltransferase">
    <location>
        <begin position="1"/>
        <end position="367"/>
    </location>
</feature>
<organism>
    <name type="scientific">Mycobacterium tuberculosis (strain ATCC 25618 / H37Rv)</name>
    <dbReference type="NCBI Taxonomy" id="83332"/>
    <lineage>
        <taxon>Bacteria</taxon>
        <taxon>Bacillati</taxon>
        <taxon>Actinomycetota</taxon>
        <taxon>Actinomycetes</taxon>
        <taxon>Mycobacteriales</taxon>
        <taxon>Mycobacteriaceae</taxon>
        <taxon>Mycobacterium</taxon>
        <taxon>Mycobacterium tuberculosis complex</taxon>
    </lineage>
</organism>
<reference key="1">
    <citation type="journal article" date="1998" name="Nature">
        <title>Deciphering the biology of Mycobacterium tuberculosis from the complete genome sequence.</title>
        <authorList>
            <person name="Cole S.T."/>
            <person name="Brosch R."/>
            <person name="Parkhill J."/>
            <person name="Garnier T."/>
            <person name="Churcher C.M."/>
            <person name="Harris D.E."/>
            <person name="Gordon S.V."/>
            <person name="Eiglmeier K."/>
            <person name="Gas S."/>
            <person name="Barry C.E. III"/>
            <person name="Tekaia F."/>
            <person name="Badcock K."/>
            <person name="Basham D."/>
            <person name="Brown D."/>
            <person name="Chillingworth T."/>
            <person name="Connor R."/>
            <person name="Davies R.M."/>
            <person name="Devlin K."/>
            <person name="Feltwell T."/>
            <person name="Gentles S."/>
            <person name="Hamlin N."/>
            <person name="Holroyd S."/>
            <person name="Hornsby T."/>
            <person name="Jagels K."/>
            <person name="Krogh A."/>
            <person name="McLean J."/>
            <person name="Moule S."/>
            <person name="Murphy L.D."/>
            <person name="Oliver S."/>
            <person name="Osborne J."/>
            <person name="Quail M.A."/>
            <person name="Rajandream M.A."/>
            <person name="Rogers J."/>
            <person name="Rutter S."/>
            <person name="Seeger K."/>
            <person name="Skelton S."/>
            <person name="Squares S."/>
            <person name="Squares R."/>
            <person name="Sulston J.E."/>
            <person name="Taylor K."/>
            <person name="Whitehead S."/>
            <person name="Barrell B.G."/>
        </authorList>
    </citation>
    <scope>NUCLEOTIDE SEQUENCE [LARGE SCALE GENOMIC DNA]</scope>
    <source>
        <strain>ATCC 25618 / H37Rv</strain>
    </source>
</reference>
<reference key="2">
    <citation type="journal article" date="2008" name="BMC Syst. Biol.">
        <title>targetTB: a target identification pipeline for Mycobacterium tuberculosis through an interactome, reactome and genome-scale structural analysis.</title>
        <authorList>
            <person name="Raman K."/>
            <person name="Yeturu K."/>
            <person name="Chandra N."/>
        </authorList>
    </citation>
    <scope>IDENTIFICATION AS A DRUG TARGET [LARGE SCALE ANALYSIS]</scope>
</reference>
<reference key="3">
    <citation type="journal article" date="2011" name="Mol. Cell. Proteomics">
        <title>Proteogenomic analysis of Mycobacterium tuberculosis by high resolution mass spectrometry.</title>
        <authorList>
            <person name="Kelkar D.S."/>
            <person name="Kumar D."/>
            <person name="Kumar P."/>
            <person name="Balakrishnan L."/>
            <person name="Muthusamy B."/>
            <person name="Yadav A.K."/>
            <person name="Shrivastava P."/>
            <person name="Marimuthu A."/>
            <person name="Anand S."/>
            <person name="Sundaram H."/>
            <person name="Kingsbury R."/>
            <person name="Harsha H.C."/>
            <person name="Nair B."/>
            <person name="Prasad T.S."/>
            <person name="Chauhan D.S."/>
            <person name="Katoch K."/>
            <person name="Katoch V.M."/>
            <person name="Kumar P."/>
            <person name="Chaerkady R."/>
            <person name="Ramachandran S."/>
            <person name="Dash D."/>
            <person name="Pandey A."/>
        </authorList>
    </citation>
    <scope>IDENTIFICATION BY MASS SPECTROMETRY [LARGE SCALE ANALYSIS]</scope>
    <source>
        <strain>ATCC 25618 / H37Rv</strain>
    </source>
</reference>
<dbReference type="EC" id="2.1.2.10" evidence="1"/>
<dbReference type="EMBL" id="AL123456">
    <property type="protein sequence ID" value="CCP44988.1"/>
    <property type="status" value="ALT_INIT"/>
    <property type="molecule type" value="Genomic_DNA"/>
</dbReference>
<dbReference type="PIR" id="D70786">
    <property type="entry name" value="D70786"/>
</dbReference>
<dbReference type="RefSeq" id="NP_216727.1">
    <property type="nucleotide sequence ID" value="NC_000962.3"/>
</dbReference>
<dbReference type="RefSeq" id="WP_003411440.1">
    <property type="nucleotide sequence ID" value="NC_000962.3"/>
</dbReference>
<dbReference type="RefSeq" id="WP_003899219.1">
    <property type="nucleotide sequence ID" value="NZ_NVQJ01000008.1"/>
</dbReference>
<dbReference type="SMR" id="P9WN51"/>
<dbReference type="FunCoup" id="P9WN51">
    <property type="interactions" value="429"/>
</dbReference>
<dbReference type="STRING" id="83332.Rv2211c"/>
<dbReference type="PaxDb" id="83332-Rv2211c"/>
<dbReference type="DNASU" id="887233"/>
<dbReference type="GeneID" id="45426187"/>
<dbReference type="GeneID" id="887233"/>
<dbReference type="KEGG" id="mtu:Rv2211c"/>
<dbReference type="PATRIC" id="fig|83332.12.peg.2463"/>
<dbReference type="TubercuList" id="Rv2211c"/>
<dbReference type="eggNOG" id="COG0404">
    <property type="taxonomic scope" value="Bacteria"/>
</dbReference>
<dbReference type="InParanoid" id="P9WN51"/>
<dbReference type="OrthoDB" id="9774591at2"/>
<dbReference type="Proteomes" id="UP000001584">
    <property type="component" value="Chromosome"/>
</dbReference>
<dbReference type="GO" id="GO:0005829">
    <property type="term" value="C:cytosol"/>
    <property type="evidence" value="ECO:0000318"/>
    <property type="project" value="GO_Central"/>
</dbReference>
<dbReference type="GO" id="GO:0005960">
    <property type="term" value="C:glycine cleavage complex"/>
    <property type="evidence" value="ECO:0007669"/>
    <property type="project" value="InterPro"/>
</dbReference>
<dbReference type="GO" id="GO:0009274">
    <property type="term" value="C:peptidoglycan-based cell wall"/>
    <property type="evidence" value="ECO:0007005"/>
    <property type="project" value="MTBBASE"/>
</dbReference>
<dbReference type="GO" id="GO:0004047">
    <property type="term" value="F:aminomethyltransferase activity"/>
    <property type="evidence" value="ECO:0007669"/>
    <property type="project" value="UniProtKB-UniRule"/>
</dbReference>
<dbReference type="GO" id="GO:0008483">
    <property type="term" value="F:transaminase activity"/>
    <property type="evidence" value="ECO:0007669"/>
    <property type="project" value="UniProtKB-KW"/>
</dbReference>
<dbReference type="GO" id="GO:0019464">
    <property type="term" value="P:glycine decarboxylation via glycine cleavage system"/>
    <property type="evidence" value="ECO:0007669"/>
    <property type="project" value="UniProtKB-UniRule"/>
</dbReference>
<dbReference type="FunFam" id="3.30.70.1400:FF:000001">
    <property type="entry name" value="Aminomethyltransferase"/>
    <property type="match status" value="1"/>
</dbReference>
<dbReference type="FunFam" id="4.10.1250.10:FF:000001">
    <property type="entry name" value="Aminomethyltransferase"/>
    <property type="match status" value="1"/>
</dbReference>
<dbReference type="Gene3D" id="2.40.30.110">
    <property type="entry name" value="Aminomethyltransferase beta-barrel domains"/>
    <property type="match status" value="1"/>
</dbReference>
<dbReference type="Gene3D" id="3.30.70.1400">
    <property type="entry name" value="Aminomethyltransferase beta-barrel domains"/>
    <property type="match status" value="1"/>
</dbReference>
<dbReference type="Gene3D" id="4.10.1250.10">
    <property type="entry name" value="Aminomethyltransferase fragment"/>
    <property type="match status" value="1"/>
</dbReference>
<dbReference type="Gene3D" id="3.30.1360.120">
    <property type="entry name" value="Probable tRNA modification gtpase trme, domain 1"/>
    <property type="match status" value="1"/>
</dbReference>
<dbReference type="HAMAP" id="MF_00259">
    <property type="entry name" value="GcvT"/>
    <property type="match status" value="1"/>
</dbReference>
<dbReference type="InterPro" id="IPR006223">
    <property type="entry name" value="GCS_T"/>
</dbReference>
<dbReference type="InterPro" id="IPR022903">
    <property type="entry name" value="GCS_T_bac"/>
</dbReference>
<dbReference type="InterPro" id="IPR013977">
    <property type="entry name" value="GCST_C"/>
</dbReference>
<dbReference type="InterPro" id="IPR006222">
    <property type="entry name" value="GCV_T_N"/>
</dbReference>
<dbReference type="InterPro" id="IPR028896">
    <property type="entry name" value="GcvT/YgfZ/DmdA"/>
</dbReference>
<dbReference type="InterPro" id="IPR029043">
    <property type="entry name" value="GcvT/YgfZ_C"/>
</dbReference>
<dbReference type="InterPro" id="IPR027266">
    <property type="entry name" value="TrmE/GcvT_dom1"/>
</dbReference>
<dbReference type="NCBIfam" id="TIGR00528">
    <property type="entry name" value="gcvT"/>
    <property type="match status" value="1"/>
</dbReference>
<dbReference type="NCBIfam" id="NF001567">
    <property type="entry name" value="PRK00389.1"/>
    <property type="match status" value="1"/>
</dbReference>
<dbReference type="PANTHER" id="PTHR43757">
    <property type="entry name" value="AMINOMETHYLTRANSFERASE"/>
    <property type="match status" value="1"/>
</dbReference>
<dbReference type="PANTHER" id="PTHR43757:SF2">
    <property type="entry name" value="AMINOMETHYLTRANSFERASE, MITOCHONDRIAL"/>
    <property type="match status" value="1"/>
</dbReference>
<dbReference type="Pfam" id="PF01571">
    <property type="entry name" value="GCV_T"/>
    <property type="match status" value="1"/>
</dbReference>
<dbReference type="Pfam" id="PF08669">
    <property type="entry name" value="GCV_T_C"/>
    <property type="match status" value="1"/>
</dbReference>
<dbReference type="PIRSF" id="PIRSF006487">
    <property type="entry name" value="GcvT"/>
    <property type="match status" value="1"/>
</dbReference>
<dbReference type="SUPFAM" id="SSF101790">
    <property type="entry name" value="Aminomethyltransferase beta-barrel domain"/>
    <property type="match status" value="1"/>
</dbReference>
<dbReference type="SUPFAM" id="SSF103025">
    <property type="entry name" value="Folate-binding domain"/>
    <property type="match status" value="1"/>
</dbReference>
<name>GCST_MYCTU</name>
<proteinExistence type="evidence at protein level"/>
<protein>
    <recommendedName>
        <fullName evidence="1">Aminomethyltransferase</fullName>
        <ecNumber evidence="1">2.1.2.10</ecNumber>
    </recommendedName>
    <alternativeName>
        <fullName evidence="1">Glycine cleavage system T protein</fullName>
    </alternativeName>
</protein>
<sequence>MSDVPELIHGPLEDRHRELGASFAEFGGWLMPVSYAGTVSEHNATRTAVGLFDVSHLGKALVRGPGAAQFVNSALTNDLGRIGPGKAQYTLCCTESGGVIDDLIAYYVSDDEIFLVPNAANTAAVVGALQAAAPGGLSITNLHRSYAVLAVQGPCSTDVLTALGLPTEMDYMGYADASYSGVPVRVCRTGYTGEHGYELLPPWESAGVVFDALLAAVSAAGGEPAGLGARDTLRTEMGYPLHGHELSLDISPLQARCGWAVGWRKDAFFGRAALLAEKAAGPRRLLRGLRMVGRGVLRPGLAVLVGDETVGVTTSGTFSPTLQVGIGLALIDSDAGIEDGQQINVDVRGRAVECQVVCPPFVAVKTR</sequence>
<evidence type="ECO:0000255" key="1">
    <source>
        <dbReference type="HAMAP-Rule" id="MF_00259"/>
    </source>
</evidence>
<evidence type="ECO:0000305" key="2"/>
<accession>P9WN51</accession>
<accession>L0TAI2</accession>
<accession>P64220</accession>
<accession>Q10376</accession>